<comment type="function">
    <text evidence="1">Regulator of Notch signaling, a signaling pathway involved in cell-cell communications that regulates a broad spectrum of cell-fate determinations. Probably acts both as a positive and negative regulator of Notch, depending on the developmental and cell context. Functions as a ubiquitin ligase protein in vitro, suggesting that it may regulate the Notch pathway via some ubiquitin ligase activity.</text>
</comment>
<comment type="catalytic activity">
    <reaction evidence="2">
        <text>S-ubiquitinyl-[E2 ubiquitin-conjugating enzyme]-L-cysteine + [acceptor protein]-L-lysine = [E2 ubiquitin-conjugating enzyme]-L-cysteine + N(6)-ubiquitinyl-[acceptor protein]-L-lysine.</text>
        <dbReference type="EC" id="2.3.2.27"/>
    </reaction>
</comment>
<comment type="pathway">
    <text>Protein modification; protein ubiquitination.</text>
</comment>
<comment type="subunit">
    <text evidence="3">Homodimer. May form a heterodimer with other members of the Deltex family. Interacts with NOTCH1.</text>
</comment>
<comment type="subcellular location">
    <subcellularLocation>
        <location evidence="6">Cytoplasm</location>
    </subcellularLocation>
</comment>
<comment type="similarity">
    <text evidence="6">Belongs to the Deltex family.</text>
</comment>
<evidence type="ECO:0000250" key="1"/>
<evidence type="ECO:0000250" key="2">
    <source>
        <dbReference type="UniProtKB" id="Q61010"/>
    </source>
</evidence>
<evidence type="ECO:0000250" key="3">
    <source>
        <dbReference type="UniProtKB" id="Q80V91"/>
    </source>
</evidence>
<evidence type="ECO:0000255" key="4">
    <source>
        <dbReference type="PROSITE-ProRule" id="PRU00175"/>
    </source>
</evidence>
<evidence type="ECO:0000256" key="5">
    <source>
        <dbReference type="SAM" id="MobiDB-lite"/>
    </source>
</evidence>
<evidence type="ECO:0000305" key="6"/>
<name>DTX3_PONAB</name>
<sequence>MSFVLSRMAACGGTCKNKVTVSKPVWDFLSKETPARLARLREEHRVSILIDGETSDIYVLQLSPQGPPPAPPNGLYLARKALKGLLKEAEKELKKAQRQGELMGCLALGGGGEHPEMHRAGPPPLRAAPLLPPGARGLPPPPPPLPPPLPPRLREEAEEQESTCPICLGEIQNAKTLEKCRHSFCEGCITRALQVKKACPMCGRFYGQLVGNQPQNGRMLVSKDATLLLPSYEKYGTIVIQYVFPPGVQGAEHPNPGVRYPGTTRVAYLPDCPEGNKVLTLFRKAFDQRLTFTIGTSMTTGRPNVITWNDIHHKTSCTGGPQLFGYPDPTYLTRVQEELRAKGITDD</sequence>
<dbReference type="EC" id="2.3.2.27" evidence="2"/>
<dbReference type="EMBL" id="CR857565">
    <property type="protein sequence ID" value="CAH89843.1"/>
    <property type="molecule type" value="mRNA"/>
</dbReference>
<dbReference type="RefSeq" id="NP_001124856.1">
    <property type="nucleotide sequence ID" value="NM_001131384.1"/>
</dbReference>
<dbReference type="RefSeq" id="XP_024111828.1">
    <property type="nucleotide sequence ID" value="XM_024256060.3"/>
</dbReference>
<dbReference type="RefSeq" id="XP_054382255.1">
    <property type="nucleotide sequence ID" value="XM_054526280.2"/>
</dbReference>
<dbReference type="RefSeq" id="XP_063567584.1">
    <property type="nucleotide sequence ID" value="XM_063711514.1"/>
</dbReference>
<dbReference type="SMR" id="Q5REG4"/>
<dbReference type="FunCoup" id="Q5REG4">
    <property type="interactions" value="134"/>
</dbReference>
<dbReference type="Ensembl" id="ENSPPYT00000005559.3">
    <property type="protein sequence ID" value="ENSPPYP00000005350.3"/>
    <property type="gene ID" value="ENSPPYG00000004697.3"/>
</dbReference>
<dbReference type="GeneID" id="100171717"/>
<dbReference type="KEGG" id="pon:100171717"/>
<dbReference type="CTD" id="196403"/>
<dbReference type="eggNOG" id="ENOG502QUYA">
    <property type="taxonomic scope" value="Eukaryota"/>
</dbReference>
<dbReference type="GeneTree" id="ENSGT00940000161404"/>
<dbReference type="InParanoid" id="Q5REG4"/>
<dbReference type="OMA" id="XAEHPNP"/>
<dbReference type="OrthoDB" id="527344at2759"/>
<dbReference type="UniPathway" id="UPA00143"/>
<dbReference type="Proteomes" id="UP000001595">
    <property type="component" value="Chromosome 12"/>
</dbReference>
<dbReference type="GO" id="GO:0005737">
    <property type="term" value="C:cytoplasm"/>
    <property type="evidence" value="ECO:0007669"/>
    <property type="project" value="UniProtKB-SubCell"/>
</dbReference>
<dbReference type="GO" id="GO:0016740">
    <property type="term" value="F:transferase activity"/>
    <property type="evidence" value="ECO:0007669"/>
    <property type="project" value="UniProtKB-KW"/>
</dbReference>
<dbReference type="GO" id="GO:0008270">
    <property type="term" value="F:zinc ion binding"/>
    <property type="evidence" value="ECO:0007669"/>
    <property type="project" value="UniProtKB-KW"/>
</dbReference>
<dbReference type="GO" id="GO:0007219">
    <property type="term" value="P:Notch signaling pathway"/>
    <property type="evidence" value="ECO:0007669"/>
    <property type="project" value="UniProtKB-KW"/>
</dbReference>
<dbReference type="GO" id="GO:0016567">
    <property type="term" value="P:protein ubiquitination"/>
    <property type="evidence" value="ECO:0007669"/>
    <property type="project" value="UniProtKB-UniPathway"/>
</dbReference>
<dbReference type="CDD" id="cd09633">
    <property type="entry name" value="Deltex_C"/>
    <property type="match status" value="1"/>
</dbReference>
<dbReference type="CDD" id="cd16711">
    <property type="entry name" value="RING-HC_DTX3"/>
    <property type="match status" value="1"/>
</dbReference>
<dbReference type="FunFam" id="3.30.390.130:FF:000001">
    <property type="entry name" value="Probable E3 ubiquitin-protein ligase DTX3"/>
    <property type="match status" value="1"/>
</dbReference>
<dbReference type="FunFam" id="3.30.40.10:FF:000254">
    <property type="entry name" value="Probable E3 ubiquitin-protein ligase DTX3"/>
    <property type="match status" value="1"/>
</dbReference>
<dbReference type="Gene3D" id="3.30.390.130">
    <property type="match status" value="1"/>
</dbReference>
<dbReference type="Gene3D" id="3.30.40.10">
    <property type="entry name" value="Zinc/RING finger domain, C3HC4 (zinc finger)"/>
    <property type="match status" value="1"/>
</dbReference>
<dbReference type="InterPro" id="IPR039396">
    <property type="entry name" value="Deltex_C"/>
</dbReference>
<dbReference type="InterPro" id="IPR039399">
    <property type="entry name" value="Deltex_C_sf"/>
</dbReference>
<dbReference type="InterPro" id="IPR039398">
    <property type="entry name" value="Deltex_fam"/>
</dbReference>
<dbReference type="InterPro" id="IPR001841">
    <property type="entry name" value="Znf_RING"/>
</dbReference>
<dbReference type="InterPro" id="IPR013083">
    <property type="entry name" value="Znf_RING/FYVE/PHD"/>
</dbReference>
<dbReference type="InterPro" id="IPR017907">
    <property type="entry name" value="Znf_RING_CS"/>
</dbReference>
<dbReference type="PANTHER" id="PTHR12622">
    <property type="entry name" value="DELTEX-RELATED"/>
    <property type="match status" value="1"/>
</dbReference>
<dbReference type="Pfam" id="PF18102">
    <property type="entry name" value="DTC"/>
    <property type="match status" value="1"/>
</dbReference>
<dbReference type="Pfam" id="PF13923">
    <property type="entry name" value="zf-C3HC4_2"/>
    <property type="match status" value="1"/>
</dbReference>
<dbReference type="SMART" id="SM00184">
    <property type="entry name" value="RING"/>
    <property type="match status" value="1"/>
</dbReference>
<dbReference type="SUPFAM" id="SSF57850">
    <property type="entry name" value="RING/U-box"/>
    <property type="match status" value="1"/>
</dbReference>
<dbReference type="PROSITE" id="PS00518">
    <property type="entry name" value="ZF_RING_1"/>
    <property type="match status" value="1"/>
</dbReference>
<dbReference type="PROSITE" id="PS50089">
    <property type="entry name" value="ZF_RING_2"/>
    <property type="match status" value="1"/>
</dbReference>
<proteinExistence type="evidence at transcript level"/>
<organism>
    <name type="scientific">Pongo abelii</name>
    <name type="common">Sumatran orangutan</name>
    <name type="synonym">Pongo pygmaeus abelii</name>
    <dbReference type="NCBI Taxonomy" id="9601"/>
    <lineage>
        <taxon>Eukaryota</taxon>
        <taxon>Metazoa</taxon>
        <taxon>Chordata</taxon>
        <taxon>Craniata</taxon>
        <taxon>Vertebrata</taxon>
        <taxon>Euteleostomi</taxon>
        <taxon>Mammalia</taxon>
        <taxon>Eutheria</taxon>
        <taxon>Euarchontoglires</taxon>
        <taxon>Primates</taxon>
        <taxon>Haplorrhini</taxon>
        <taxon>Catarrhini</taxon>
        <taxon>Hominidae</taxon>
        <taxon>Pongo</taxon>
    </lineage>
</organism>
<protein>
    <recommendedName>
        <fullName>Probable E3 ubiquitin-protein ligase DTX3</fullName>
        <ecNumber evidence="2">2.3.2.27</ecNumber>
    </recommendedName>
    <alternativeName>
        <fullName>Protein deltex-3</fullName>
        <shortName>Deltex3</shortName>
    </alternativeName>
    <alternativeName>
        <fullName evidence="6">RING-type E3 ubiquitin transferase DTX3</fullName>
    </alternativeName>
</protein>
<reference key="1">
    <citation type="submission" date="2004-11" db="EMBL/GenBank/DDBJ databases">
        <authorList>
            <consortium name="The German cDNA consortium"/>
        </authorList>
    </citation>
    <scope>NUCLEOTIDE SEQUENCE [LARGE SCALE MRNA]</scope>
    <source>
        <tissue>Heart</tissue>
    </source>
</reference>
<feature type="chain" id="PRO_0000307379" description="Probable E3 ubiquitin-protein ligase DTX3">
    <location>
        <begin position="1"/>
        <end position="347"/>
    </location>
</feature>
<feature type="zinc finger region" description="RING-type" evidence="4">
    <location>
        <begin position="164"/>
        <end position="205"/>
    </location>
</feature>
<feature type="region of interest" description="Disordered" evidence="5">
    <location>
        <begin position="113"/>
        <end position="157"/>
    </location>
</feature>
<feature type="compositionally biased region" description="Pro residues" evidence="5">
    <location>
        <begin position="121"/>
        <end position="151"/>
    </location>
</feature>
<gene>
    <name type="primary">DTX3</name>
</gene>
<keyword id="KW-0963">Cytoplasm</keyword>
<keyword id="KW-0479">Metal-binding</keyword>
<keyword id="KW-0914">Notch signaling pathway</keyword>
<keyword id="KW-1185">Reference proteome</keyword>
<keyword id="KW-0808">Transferase</keyword>
<keyword id="KW-0833">Ubl conjugation pathway</keyword>
<keyword id="KW-0862">Zinc</keyword>
<keyword id="KW-0863">Zinc-finger</keyword>
<accession>Q5REG4</accession>